<organism>
    <name type="scientific">Lucilia cuprina</name>
    <name type="common">Green bottle fly</name>
    <name type="synonym">Australian sheep blowfly</name>
    <dbReference type="NCBI Taxonomy" id="7375"/>
    <lineage>
        <taxon>Eukaryota</taxon>
        <taxon>Metazoa</taxon>
        <taxon>Ecdysozoa</taxon>
        <taxon>Arthropoda</taxon>
        <taxon>Hexapoda</taxon>
        <taxon>Insecta</taxon>
        <taxon>Pterygota</taxon>
        <taxon>Neoptera</taxon>
        <taxon>Endopterygota</taxon>
        <taxon>Diptera</taxon>
        <taxon>Brachycera</taxon>
        <taxon>Muscomorpha</taxon>
        <taxon>Oestroidea</taxon>
        <taxon>Calliphoridae</taxon>
        <taxon>Luciliinae</taxon>
        <taxon>Lucilia</taxon>
    </lineage>
</organism>
<name>TRYA3_LUCCU</name>
<reference key="1">
    <citation type="journal article" date="1994" name="Insect Mol. Biol.">
        <title>Isolation of a trypsin-like serine protease gene family from the sheep blowfly Lucilia cuprina.</title>
        <authorList>
            <person name="Casu R.E."/>
            <person name="Jarmey J.M."/>
            <person name="Elvin C.M."/>
            <person name="Eisemann C.H."/>
        </authorList>
    </citation>
    <scope>NUCLEOTIDE SEQUENCE [GENOMIC DNA]</scope>
</reference>
<comment type="catalytic activity">
    <reaction>
        <text>Preferential cleavage: Arg-|-Xaa, Lys-|-Xaa.</text>
        <dbReference type="EC" id="3.4.21.4"/>
    </reaction>
</comment>
<comment type="subcellular location">
    <subcellularLocation>
        <location>Secreted</location>
        <location>Extracellular space</location>
    </subcellularLocation>
</comment>
<comment type="similarity">
    <text evidence="2">Belongs to the peptidase S1 family.</text>
</comment>
<accession>P35043</accession>
<sequence>NSGGVLVSVAAFKNHEGYNSKTMVNDIAVIRLSSSLTTSSTIKTIGLATAAPANGAAATVSGWGTTSSGGSIPSQLRYVDVKIVGRTQCASSTYGYGSEIKASMICAYTVGKDSCQGDSGGPLVSGGRLVGVVSWGYGCAAVNYPGVYADVAALRSWVVSAANSV</sequence>
<proteinExistence type="inferred from homology"/>
<protein>
    <recommendedName>
        <fullName>Trypsin alpha-3</fullName>
        <ecNumber>3.4.21.4</ecNumber>
    </recommendedName>
</protein>
<dbReference type="EC" id="3.4.21.4"/>
<dbReference type="EMBL" id="L15632">
    <property type="protein sequence ID" value="AAA65931.1"/>
    <property type="molecule type" value="Genomic_DNA"/>
</dbReference>
<dbReference type="SMR" id="P35043"/>
<dbReference type="MEROPS" id="S01.112"/>
<dbReference type="OrthoDB" id="10059102at2759"/>
<dbReference type="GO" id="GO:0005576">
    <property type="term" value="C:extracellular region"/>
    <property type="evidence" value="ECO:0007669"/>
    <property type="project" value="UniProtKB-SubCell"/>
</dbReference>
<dbReference type="GO" id="GO:0004252">
    <property type="term" value="F:serine-type endopeptidase activity"/>
    <property type="evidence" value="ECO:0007669"/>
    <property type="project" value="UniProtKB-EC"/>
</dbReference>
<dbReference type="GO" id="GO:0006508">
    <property type="term" value="P:proteolysis"/>
    <property type="evidence" value="ECO:0007669"/>
    <property type="project" value="UniProtKB-KW"/>
</dbReference>
<dbReference type="CDD" id="cd00190">
    <property type="entry name" value="Tryp_SPc"/>
    <property type="match status" value="1"/>
</dbReference>
<dbReference type="FunFam" id="2.40.10.10:FF:000036">
    <property type="entry name" value="Trypsin beta"/>
    <property type="match status" value="1"/>
</dbReference>
<dbReference type="Gene3D" id="2.40.10.10">
    <property type="entry name" value="Trypsin-like serine proteases"/>
    <property type="match status" value="2"/>
</dbReference>
<dbReference type="InterPro" id="IPR050430">
    <property type="entry name" value="Peptidase_S1"/>
</dbReference>
<dbReference type="InterPro" id="IPR009003">
    <property type="entry name" value="Peptidase_S1_PA"/>
</dbReference>
<dbReference type="InterPro" id="IPR043504">
    <property type="entry name" value="Peptidase_S1_PA_chymotrypsin"/>
</dbReference>
<dbReference type="InterPro" id="IPR001314">
    <property type="entry name" value="Peptidase_S1A"/>
</dbReference>
<dbReference type="InterPro" id="IPR001254">
    <property type="entry name" value="Trypsin_dom"/>
</dbReference>
<dbReference type="InterPro" id="IPR033116">
    <property type="entry name" value="TRYPSIN_SER"/>
</dbReference>
<dbReference type="PANTHER" id="PTHR24276:SF91">
    <property type="entry name" value="AT26814P-RELATED"/>
    <property type="match status" value="1"/>
</dbReference>
<dbReference type="PANTHER" id="PTHR24276">
    <property type="entry name" value="POLYSERASE-RELATED"/>
    <property type="match status" value="1"/>
</dbReference>
<dbReference type="Pfam" id="PF00089">
    <property type="entry name" value="Trypsin"/>
    <property type="match status" value="1"/>
</dbReference>
<dbReference type="PRINTS" id="PR00722">
    <property type="entry name" value="CHYMOTRYPSIN"/>
</dbReference>
<dbReference type="SMART" id="SM00020">
    <property type="entry name" value="Tryp_SPc"/>
    <property type="match status" value="1"/>
</dbReference>
<dbReference type="SUPFAM" id="SSF50494">
    <property type="entry name" value="Trypsin-like serine proteases"/>
    <property type="match status" value="1"/>
</dbReference>
<dbReference type="PROSITE" id="PS50240">
    <property type="entry name" value="TRYPSIN_DOM"/>
    <property type="match status" value="1"/>
</dbReference>
<dbReference type="PROSITE" id="PS00135">
    <property type="entry name" value="TRYPSIN_SER"/>
    <property type="match status" value="1"/>
</dbReference>
<feature type="chain" id="PRO_0000088717" description="Trypsin alpha-3">
    <location>
        <begin position="1" status="less than"/>
        <end position="165"/>
    </location>
</feature>
<feature type="domain" description="Peptidase S1" evidence="2">
    <location>
        <begin position="1" status="less than"/>
        <end position="163"/>
    </location>
</feature>
<feature type="active site" description="Charge relay system" evidence="1">
    <location>
        <position position="26"/>
    </location>
</feature>
<feature type="active site" description="Charge relay system" evidence="1">
    <location>
        <position position="119"/>
    </location>
</feature>
<feature type="site" description="Required for specificity" evidence="1">
    <location>
        <position position="113"/>
    </location>
</feature>
<feature type="disulfide bond" evidence="2">
    <location>
        <begin position="89"/>
        <end position="106"/>
    </location>
</feature>
<feature type="disulfide bond" evidence="2">
    <location>
        <begin position="115"/>
        <end position="139"/>
    </location>
</feature>
<feature type="non-terminal residue">
    <location>
        <position position="1"/>
    </location>
</feature>
<keyword id="KW-1015">Disulfide bond</keyword>
<keyword id="KW-0378">Hydrolase</keyword>
<keyword id="KW-0645">Protease</keyword>
<keyword id="KW-0964">Secreted</keyword>
<keyword id="KW-0720">Serine protease</keyword>
<evidence type="ECO:0000250" key="1"/>
<evidence type="ECO:0000255" key="2">
    <source>
        <dbReference type="PROSITE-ProRule" id="PRU00274"/>
    </source>
</evidence>